<reference key="1">
    <citation type="journal article" date="1989" name="Plasmid">
        <title>Nucleotide sequence of a novel kanamycin resistance gene, aphA-7, from Campylobacter jejuni and comparison to other kanamycin phosphotransferase genes.</title>
        <authorList>
            <person name="Tenover F.C."/>
            <person name="Gilbert T."/>
            <person name="O'Hara P."/>
        </authorList>
    </citation>
    <scope>NUCLEOTIDE SEQUENCE [GENOMIC DNA]</scope>
    <source>
        <strain>PS1178</strain>
    </source>
</reference>
<evidence type="ECO:0000250" key="1"/>
<evidence type="ECO:0000305" key="2"/>
<keyword id="KW-0046">Antibiotic resistance</keyword>
<keyword id="KW-0067">ATP-binding</keyword>
<keyword id="KW-0418">Kinase</keyword>
<keyword id="KW-0547">Nucleotide-binding</keyword>
<keyword id="KW-0614">Plasmid</keyword>
<keyword id="KW-0808">Transferase</keyword>
<organism>
    <name type="scientific">Campylobacter jejuni</name>
    <dbReference type="NCBI Taxonomy" id="197"/>
    <lineage>
        <taxon>Bacteria</taxon>
        <taxon>Pseudomonadati</taxon>
        <taxon>Campylobacterota</taxon>
        <taxon>Epsilonproteobacteria</taxon>
        <taxon>Campylobacterales</taxon>
        <taxon>Campylobacteraceae</taxon>
        <taxon>Campylobacter</taxon>
    </lineage>
</organism>
<comment type="function">
    <text>Resistance to kanamycin and structurally-related aminoglycosides, including amikacin.</text>
</comment>
<comment type="catalytic activity">
    <reaction>
        <text>kanamycin A + ATP = kanamycin 3'-phosphate + ADP + H(+)</text>
        <dbReference type="Rhea" id="RHEA:24256"/>
        <dbReference type="ChEBI" id="CHEBI:15378"/>
        <dbReference type="ChEBI" id="CHEBI:30616"/>
        <dbReference type="ChEBI" id="CHEBI:57909"/>
        <dbReference type="ChEBI" id="CHEBI:58214"/>
        <dbReference type="ChEBI" id="CHEBI:456216"/>
        <dbReference type="EC" id="2.7.1.95"/>
    </reaction>
</comment>
<comment type="similarity">
    <text evidence="2">Belongs to the aminoglycoside phosphotransferase family.</text>
</comment>
<geneLocation type="plasmid"/>
<protein>
    <recommendedName>
        <fullName>Aminoglycoside 3'-phosphotransferase</fullName>
        <ecNumber>2.7.1.95</ecNumber>
    </recommendedName>
    <alternativeName>
        <fullName>APH(3')VII</fullName>
    </alternativeName>
    <alternativeName>
        <fullName>Kanamycin kinase, type VII</fullName>
    </alternativeName>
    <alternativeName>
        <fullName>Neomycin-kanamycin phosphotransferase type VII</fullName>
    </alternativeName>
</protein>
<accession>P14508</accession>
<sequence length="250" mass="29688">MKYIDEIQILGKCSEGMSPAEVYKCQLKNTVCYLKKIDDIFSKTTYSVKREAEMMMWLSDKLKVPDVIEYGVREHSEYLIMSELRGKHIDCFIDHPIKYIECLVNALHQLQAIDIRNCPFSSKIDVRLKELKYLLDNRIADIDVSNWEDTTEFDDPMTLYQWLCENQPQEELCLSHGDMSANFFVSHDGIYFYDLARCGVADKWLDIAFCVREIREYYPDSDYEKFFFNMLGLEPDYKKINYYILLDEMF</sequence>
<dbReference type="EC" id="2.7.1.95"/>
<dbReference type="EMBL" id="M29953">
    <property type="protein sequence ID" value="AAA76822.1"/>
    <property type="molecule type" value="Genomic_DNA"/>
</dbReference>
<dbReference type="PIR" id="A43623">
    <property type="entry name" value="A43623"/>
</dbReference>
<dbReference type="SMR" id="P14508"/>
<dbReference type="CARD" id="ARO:3002654">
    <property type="molecule name" value="APH(3')-VIIa"/>
    <property type="mechanism identifier" value="ARO:0001004"/>
    <property type="mechanism name" value="antibiotic inactivation"/>
</dbReference>
<dbReference type="KEGG" id="ag:AAA76822"/>
<dbReference type="GO" id="GO:0005524">
    <property type="term" value="F:ATP binding"/>
    <property type="evidence" value="ECO:0007669"/>
    <property type="project" value="UniProtKB-KW"/>
</dbReference>
<dbReference type="GO" id="GO:0008910">
    <property type="term" value="F:kanamycin kinase activity"/>
    <property type="evidence" value="ECO:0007669"/>
    <property type="project" value="UniProtKB-EC"/>
</dbReference>
<dbReference type="GO" id="GO:0046677">
    <property type="term" value="P:response to antibiotic"/>
    <property type="evidence" value="ECO:0007669"/>
    <property type="project" value="UniProtKB-KW"/>
</dbReference>
<dbReference type="CDD" id="cd05150">
    <property type="entry name" value="APH"/>
    <property type="match status" value="1"/>
</dbReference>
<dbReference type="Gene3D" id="3.90.1200.10">
    <property type="match status" value="1"/>
</dbReference>
<dbReference type="Gene3D" id="3.30.200.20">
    <property type="entry name" value="Phosphorylase Kinase, domain 1"/>
    <property type="match status" value="1"/>
</dbReference>
<dbReference type="InterPro" id="IPR002575">
    <property type="entry name" value="Aminoglycoside_PTrfase"/>
</dbReference>
<dbReference type="InterPro" id="IPR024165">
    <property type="entry name" value="Kan/Strep_kinase"/>
</dbReference>
<dbReference type="InterPro" id="IPR011009">
    <property type="entry name" value="Kinase-like_dom_sf"/>
</dbReference>
<dbReference type="NCBIfam" id="NF033068">
    <property type="entry name" value="APH_3p"/>
    <property type="match status" value="1"/>
</dbReference>
<dbReference type="NCBIfam" id="NF033067">
    <property type="entry name" value="APH_3p_VIIa"/>
    <property type="match status" value="1"/>
</dbReference>
<dbReference type="Pfam" id="PF01636">
    <property type="entry name" value="APH"/>
    <property type="match status" value="1"/>
</dbReference>
<dbReference type="PIRSF" id="PIRSF000706">
    <property type="entry name" value="Kanamycin_kin"/>
    <property type="match status" value="1"/>
</dbReference>
<dbReference type="SUPFAM" id="SSF56112">
    <property type="entry name" value="Protein kinase-like (PK-like)"/>
    <property type="match status" value="1"/>
</dbReference>
<gene>
    <name type="primary">aphA-7</name>
</gene>
<name>KKA7_CAMJU</name>
<proteinExistence type="inferred from homology"/>
<feature type="chain" id="PRO_0000204810" description="Aminoglycoside 3'-phosphotransferase">
    <location>
        <begin position="1"/>
        <end position="250"/>
    </location>
</feature>
<feature type="active site" description="Proton acceptor" evidence="1">
    <location>
        <position position="178"/>
    </location>
</feature>